<protein>
    <recommendedName>
        <fullName>Dehydration-responsive element-binding protein 1J</fullName>
        <shortName>Protein DREB1J</shortName>
    </recommendedName>
</protein>
<proteinExistence type="inferred from homology"/>
<reference key="1">
    <citation type="journal article" date="2005" name="PLoS Biol.">
        <title>The genomes of Oryza sativa: a history of duplications.</title>
        <authorList>
            <person name="Yu J."/>
            <person name="Wang J."/>
            <person name="Lin W."/>
            <person name="Li S."/>
            <person name="Li H."/>
            <person name="Zhou J."/>
            <person name="Ni P."/>
            <person name="Dong W."/>
            <person name="Hu S."/>
            <person name="Zeng C."/>
            <person name="Zhang J."/>
            <person name="Zhang Y."/>
            <person name="Li R."/>
            <person name="Xu Z."/>
            <person name="Li S."/>
            <person name="Li X."/>
            <person name="Zheng H."/>
            <person name="Cong L."/>
            <person name="Lin L."/>
            <person name="Yin J."/>
            <person name="Geng J."/>
            <person name="Li G."/>
            <person name="Shi J."/>
            <person name="Liu J."/>
            <person name="Lv H."/>
            <person name="Li J."/>
            <person name="Wang J."/>
            <person name="Deng Y."/>
            <person name="Ran L."/>
            <person name="Shi X."/>
            <person name="Wang X."/>
            <person name="Wu Q."/>
            <person name="Li C."/>
            <person name="Ren X."/>
            <person name="Wang J."/>
            <person name="Wang X."/>
            <person name="Li D."/>
            <person name="Liu D."/>
            <person name="Zhang X."/>
            <person name="Ji Z."/>
            <person name="Zhao W."/>
            <person name="Sun Y."/>
            <person name="Zhang Z."/>
            <person name="Bao J."/>
            <person name="Han Y."/>
            <person name="Dong L."/>
            <person name="Ji J."/>
            <person name="Chen P."/>
            <person name="Wu S."/>
            <person name="Liu J."/>
            <person name="Xiao Y."/>
            <person name="Bu D."/>
            <person name="Tan J."/>
            <person name="Yang L."/>
            <person name="Ye C."/>
            <person name="Zhang J."/>
            <person name="Xu J."/>
            <person name="Zhou Y."/>
            <person name="Yu Y."/>
            <person name="Zhang B."/>
            <person name="Zhuang S."/>
            <person name="Wei H."/>
            <person name="Liu B."/>
            <person name="Lei M."/>
            <person name="Yu H."/>
            <person name="Li Y."/>
            <person name="Xu H."/>
            <person name="Wei S."/>
            <person name="He X."/>
            <person name="Fang L."/>
            <person name="Zhang Z."/>
            <person name="Zhang Y."/>
            <person name="Huang X."/>
            <person name="Su Z."/>
            <person name="Tong W."/>
            <person name="Li J."/>
            <person name="Tong Z."/>
            <person name="Li S."/>
            <person name="Ye J."/>
            <person name="Wang L."/>
            <person name="Fang L."/>
            <person name="Lei T."/>
            <person name="Chen C.-S."/>
            <person name="Chen H.-C."/>
            <person name="Xu Z."/>
            <person name="Li H."/>
            <person name="Huang H."/>
            <person name="Zhang F."/>
            <person name="Xu H."/>
            <person name="Li N."/>
            <person name="Zhao C."/>
            <person name="Li S."/>
            <person name="Dong L."/>
            <person name="Huang Y."/>
            <person name="Li L."/>
            <person name="Xi Y."/>
            <person name="Qi Q."/>
            <person name="Li W."/>
            <person name="Zhang B."/>
            <person name="Hu W."/>
            <person name="Zhang Y."/>
            <person name="Tian X."/>
            <person name="Jiao Y."/>
            <person name="Liang X."/>
            <person name="Jin J."/>
            <person name="Gao L."/>
            <person name="Zheng W."/>
            <person name="Hao B."/>
            <person name="Liu S.-M."/>
            <person name="Wang W."/>
            <person name="Yuan L."/>
            <person name="Cao M."/>
            <person name="McDermott J."/>
            <person name="Samudrala R."/>
            <person name="Wang J."/>
            <person name="Wong G.K.-S."/>
            <person name="Yang H."/>
        </authorList>
    </citation>
    <scope>NUCLEOTIDE SEQUENCE [LARGE SCALE GENOMIC DNA]</scope>
    <source>
        <strain>cv. 93-11</strain>
    </source>
</reference>
<comment type="function">
    <text evidence="1">Transcriptional activator that binds specifically to the DNA sequence 5'-[AG]CCGAC-3'. Binding to the C-repeat/DRE element mediates high salinity- and dehydration-inducible transcription (By similarity).</text>
</comment>
<comment type="subcellular location">
    <subcellularLocation>
        <location evidence="4">Nucleus</location>
    </subcellularLocation>
</comment>
<comment type="similarity">
    <text evidence="4">Belongs to the AP2/ERF transcription factor family. ERF subfamily.</text>
</comment>
<organism>
    <name type="scientific">Oryza sativa subsp. indica</name>
    <name type="common">Rice</name>
    <dbReference type="NCBI Taxonomy" id="39946"/>
    <lineage>
        <taxon>Eukaryota</taxon>
        <taxon>Viridiplantae</taxon>
        <taxon>Streptophyta</taxon>
        <taxon>Embryophyta</taxon>
        <taxon>Tracheophyta</taxon>
        <taxon>Spermatophyta</taxon>
        <taxon>Magnoliopsida</taxon>
        <taxon>Liliopsida</taxon>
        <taxon>Poales</taxon>
        <taxon>Poaceae</taxon>
        <taxon>BOP clade</taxon>
        <taxon>Oryzoideae</taxon>
        <taxon>Oryzeae</taxon>
        <taxon>Oryzinae</taxon>
        <taxon>Oryza</taxon>
        <taxon>Oryza sativa</taxon>
    </lineage>
</organism>
<evidence type="ECO:0000250" key="1"/>
<evidence type="ECO:0000255" key="2">
    <source>
        <dbReference type="PROSITE-ProRule" id="PRU00366"/>
    </source>
</evidence>
<evidence type="ECO:0000256" key="3">
    <source>
        <dbReference type="SAM" id="MobiDB-lite"/>
    </source>
</evidence>
<evidence type="ECO:0000305" key="4"/>
<dbReference type="EMBL" id="CM000133">
    <property type="status" value="NOT_ANNOTATED_CDS"/>
    <property type="molecule type" value="Genomic_DNA"/>
</dbReference>
<dbReference type="SMR" id="A2YXQ7"/>
<dbReference type="STRING" id="39946.A2YXQ7"/>
<dbReference type="HOGENOM" id="CLU_063331_1_0_1"/>
<dbReference type="Proteomes" id="UP000007015">
    <property type="component" value="Chromosome 8"/>
</dbReference>
<dbReference type="GO" id="GO:0005634">
    <property type="term" value="C:nucleus"/>
    <property type="evidence" value="ECO:0007669"/>
    <property type="project" value="UniProtKB-SubCell"/>
</dbReference>
<dbReference type="GO" id="GO:0003677">
    <property type="term" value="F:DNA binding"/>
    <property type="evidence" value="ECO:0007669"/>
    <property type="project" value="UniProtKB-KW"/>
</dbReference>
<dbReference type="GO" id="GO:0003700">
    <property type="term" value="F:DNA-binding transcription factor activity"/>
    <property type="evidence" value="ECO:0007669"/>
    <property type="project" value="InterPro"/>
</dbReference>
<dbReference type="CDD" id="cd00018">
    <property type="entry name" value="AP2"/>
    <property type="match status" value="1"/>
</dbReference>
<dbReference type="Gene3D" id="3.30.730.10">
    <property type="entry name" value="AP2/ERF domain"/>
    <property type="match status" value="1"/>
</dbReference>
<dbReference type="InterPro" id="IPR001471">
    <property type="entry name" value="AP2/ERF_dom"/>
</dbReference>
<dbReference type="InterPro" id="IPR036955">
    <property type="entry name" value="AP2/ERF_dom_sf"/>
</dbReference>
<dbReference type="InterPro" id="IPR016177">
    <property type="entry name" value="DNA-bd_dom_sf"/>
</dbReference>
<dbReference type="InterPro" id="IPR045277">
    <property type="entry name" value="DRE1A-I"/>
</dbReference>
<dbReference type="PANTHER" id="PTHR31839">
    <property type="entry name" value="DEHYDRATION-RESPONSIVE ELEMENT-BINDING PROTEIN 1D"/>
    <property type="match status" value="1"/>
</dbReference>
<dbReference type="PANTHER" id="PTHR31839:SF11">
    <property type="entry name" value="DEHYDRATION-RESPONSIVE ELEMENT-BINDING PROTEIN 1D"/>
    <property type="match status" value="1"/>
</dbReference>
<dbReference type="Pfam" id="PF00847">
    <property type="entry name" value="AP2"/>
    <property type="match status" value="1"/>
</dbReference>
<dbReference type="PRINTS" id="PR00367">
    <property type="entry name" value="ETHRSPELEMNT"/>
</dbReference>
<dbReference type="SMART" id="SM00380">
    <property type="entry name" value="AP2"/>
    <property type="match status" value="1"/>
</dbReference>
<dbReference type="SUPFAM" id="SSF54171">
    <property type="entry name" value="DNA-binding domain"/>
    <property type="match status" value="1"/>
</dbReference>
<dbReference type="PROSITE" id="PS51032">
    <property type="entry name" value="AP2_ERF"/>
    <property type="match status" value="1"/>
</dbReference>
<keyword id="KW-0010">Activator</keyword>
<keyword id="KW-0238">DNA-binding</keyword>
<keyword id="KW-0539">Nucleus</keyword>
<keyword id="KW-1185">Reference proteome</keyword>
<keyword id="KW-0346">Stress response</keyword>
<keyword id="KW-0804">Transcription</keyword>
<keyword id="KW-0805">Transcription regulation</keyword>
<gene>
    <name type="primary">DREB1J</name>
    <name type="synonym">ERF28</name>
    <name type="ORF">OsI_029100</name>
    <name type="ORF">OsI_029101</name>
</gene>
<feature type="chain" id="PRO_0000323038" description="Dehydration-responsive element-binding protein 1J">
    <location>
        <begin position="1"/>
        <end position="242"/>
    </location>
</feature>
<feature type="DNA-binding region" description="AP2/ERF" evidence="2">
    <location>
        <begin position="50"/>
        <end position="109"/>
    </location>
</feature>
<feature type="region of interest" description="Disordered" evidence="3">
    <location>
        <begin position="20"/>
        <end position="44"/>
    </location>
</feature>
<feature type="region of interest" description="Disordered" evidence="3">
    <location>
        <begin position="143"/>
        <end position="184"/>
    </location>
</feature>
<feature type="compositionally biased region" description="Low complexity" evidence="3">
    <location>
        <begin position="20"/>
        <end position="29"/>
    </location>
</feature>
<feature type="compositionally biased region" description="Low complexity" evidence="3">
    <location>
        <begin position="148"/>
        <end position="184"/>
    </location>
</feature>
<name>DRE1J_ORYSI</name>
<accession>A2YXQ7</accession>
<accession>A2YXQ8</accession>
<sequence length="242" mass="25222">MDVARDMEKNTTAMGQLMSSSATTAATATGPASPKRPAGRTKFQETRHPVFRGVRRRGRAGRWVCEVRVPGSRGDRLWVGTFDTAEEAARAHDAAMLAMCGASASLNFTDSAWLLHVPRAPVASGHDQLPDVQRAASEAVAEFQRRGSTAATATATSGDAASTAPPSSSPVLSPNDDNASSASTPAVAAALDHGDMFGGMRADLYYASLAQGLLIEPPPPPTTTEGFCDDEGCGGAEMELWS</sequence>